<evidence type="ECO:0000255" key="1">
    <source>
        <dbReference type="HAMAP-Rule" id="MF_00190"/>
    </source>
</evidence>
<gene>
    <name evidence="1" type="primary">clsA</name>
    <name type="synonym">cls</name>
    <name type="ordered locus">ECP_1296</name>
</gene>
<sequence length="486" mass="54822">MTTVYTLVSWLAILGYWLLIAGVTLRILMKRRAVPSAMAWLLIIYILPLVGIIAYLAVGELHLGKRRAERARAMWPSTAKWLNDLKACKHIFAEENSSVAAPLFKLCERRQGIAGVKGNQLQLMTESDDVMQALIRDIQLARHNIEMVFYIWQPGGMADQVAESLMAAARRGIHCRLMLDSAGSVAFFRSPWPELMRNAGIEVVEALKVNLMRVFLRRMDLRQHRKMIMIDNYIAYTGSMNMVDPRYFKQDAGVGQWIDLMARMEGPIATAMGIIYSCDWEIETGKRILPPPPDVNIMPFEQASGHTIHTIASGPGFPEDLIHQALLTAAYSAREYLIMTTPYFVPSDDLLHAICTAAQRGVDVSIILPRKNDSMLVGWASRAFFTELLAAGVKIYQFEGGLLHTKSVLVDGELSLVGTVNLDMRSLWLNFEITLAIDDKGFGADLAAVQDDYISRSRLLDARLWLKRPLWQRVAERLFYFFSPLL</sequence>
<reference key="1">
    <citation type="journal article" date="2006" name="Mol. Microbiol.">
        <title>Role of pathogenicity island-associated integrases in the genome plasticity of uropathogenic Escherichia coli strain 536.</title>
        <authorList>
            <person name="Hochhut B."/>
            <person name="Wilde C."/>
            <person name="Balling G."/>
            <person name="Middendorf B."/>
            <person name="Dobrindt U."/>
            <person name="Brzuszkiewicz E."/>
            <person name="Gottschalk G."/>
            <person name="Carniel E."/>
            <person name="Hacker J."/>
        </authorList>
    </citation>
    <scope>NUCLEOTIDE SEQUENCE [LARGE SCALE GENOMIC DNA]</scope>
    <source>
        <strain>536 / UPEC</strain>
    </source>
</reference>
<dbReference type="EC" id="2.7.8.-" evidence="1"/>
<dbReference type="EMBL" id="CP000247">
    <property type="protein sequence ID" value="ABG69307.1"/>
    <property type="molecule type" value="Genomic_DNA"/>
</dbReference>
<dbReference type="RefSeq" id="WP_000214516.1">
    <property type="nucleotide sequence ID" value="NC_008253.1"/>
</dbReference>
<dbReference type="SMR" id="Q0TIC2"/>
<dbReference type="GeneID" id="93775314"/>
<dbReference type="KEGG" id="ecp:ECP_1296"/>
<dbReference type="HOGENOM" id="CLU_038053_1_0_6"/>
<dbReference type="Proteomes" id="UP000009182">
    <property type="component" value="Chromosome"/>
</dbReference>
<dbReference type="GO" id="GO:0005886">
    <property type="term" value="C:plasma membrane"/>
    <property type="evidence" value="ECO:0007669"/>
    <property type="project" value="UniProtKB-SubCell"/>
</dbReference>
<dbReference type="GO" id="GO:0008808">
    <property type="term" value="F:cardiolipin synthase activity"/>
    <property type="evidence" value="ECO:0007669"/>
    <property type="project" value="InterPro"/>
</dbReference>
<dbReference type="GO" id="GO:0032049">
    <property type="term" value="P:cardiolipin biosynthetic process"/>
    <property type="evidence" value="ECO:0007669"/>
    <property type="project" value="InterPro"/>
</dbReference>
<dbReference type="CDD" id="cd09152">
    <property type="entry name" value="PLDc_EcCLS_like_1"/>
    <property type="match status" value="1"/>
</dbReference>
<dbReference type="CDD" id="cd09158">
    <property type="entry name" value="PLDc_EcCLS_like_2"/>
    <property type="match status" value="1"/>
</dbReference>
<dbReference type="FunFam" id="3.30.870.10:FF:000002">
    <property type="entry name" value="Cardiolipin synthase A"/>
    <property type="match status" value="1"/>
</dbReference>
<dbReference type="FunFam" id="3.30.870.10:FF:000003">
    <property type="entry name" value="Cardiolipin synthase A"/>
    <property type="match status" value="1"/>
</dbReference>
<dbReference type="Gene3D" id="3.30.870.10">
    <property type="entry name" value="Endonuclease Chain A"/>
    <property type="match status" value="2"/>
</dbReference>
<dbReference type="HAMAP" id="MF_00190">
    <property type="entry name" value="Cardiolipin_synth_ClsA"/>
    <property type="match status" value="1"/>
</dbReference>
<dbReference type="InterPro" id="IPR022924">
    <property type="entry name" value="Cardiolipin_synthase"/>
</dbReference>
<dbReference type="InterPro" id="IPR030840">
    <property type="entry name" value="CL_synthase_A"/>
</dbReference>
<dbReference type="InterPro" id="IPR027379">
    <property type="entry name" value="CLS_N"/>
</dbReference>
<dbReference type="InterPro" id="IPR025202">
    <property type="entry name" value="PLD-like_dom"/>
</dbReference>
<dbReference type="InterPro" id="IPR001736">
    <property type="entry name" value="PLipase_D/transphosphatidylase"/>
</dbReference>
<dbReference type="NCBIfam" id="TIGR04265">
    <property type="entry name" value="bac_cardiolipin"/>
    <property type="match status" value="1"/>
</dbReference>
<dbReference type="PANTHER" id="PTHR21248">
    <property type="entry name" value="CARDIOLIPIN SYNTHASE"/>
    <property type="match status" value="1"/>
</dbReference>
<dbReference type="PANTHER" id="PTHR21248:SF22">
    <property type="entry name" value="PHOSPHOLIPASE D"/>
    <property type="match status" value="1"/>
</dbReference>
<dbReference type="Pfam" id="PF13091">
    <property type="entry name" value="PLDc_2"/>
    <property type="match status" value="2"/>
</dbReference>
<dbReference type="Pfam" id="PF13396">
    <property type="entry name" value="PLDc_N"/>
    <property type="match status" value="1"/>
</dbReference>
<dbReference type="SMART" id="SM00155">
    <property type="entry name" value="PLDc"/>
    <property type="match status" value="2"/>
</dbReference>
<dbReference type="SUPFAM" id="SSF56024">
    <property type="entry name" value="Phospholipase D/nuclease"/>
    <property type="match status" value="2"/>
</dbReference>
<dbReference type="PROSITE" id="PS50035">
    <property type="entry name" value="PLD"/>
    <property type="match status" value="2"/>
</dbReference>
<keyword id="KW-0997">Cell inner membrane</keyword>
<keyword id="KW-1003">Cell membrane</keyword>
<keyword id="KW-0444">Lipid biosynthesis</keyword>
<keyword id="KW-0443">Lipid metabolism</keyword>
<keyword id="KW-0472">Membrane</keyword>
<keyword id="KW-0594">Phospholipid biosynthesis</keyword>
<keyword id="KW-1208">Phospholipid metabolism</keyword>
<keyword id="KW-0677">Repeat</keyword>
<keyword id="KW-0808">Transferase</keyword>
<keyword id="KW-0812">Transmembrane</keyword>
<keyword id="KW-1133">Transmembrane helix</keyword>
<name>CLSA_ECOL5</name>
<organism>
    <name type="scientific">Escherichia coli O6:K15:H31 (strain 536 / UPEC)</name>
    <dbReference type="NCBI Taxonomy" id="362663"/>
    <lineage>
        <taxon>Bacteria</taxon>
        <taxon>Pseudomonadati</taxon>
        <taxon>Pseudomonadota</taxon>
        <taxon>Gammaproteobacteria</taxon>
        <taxon>Enterobacterales</taxon>
        <taxon>Enterobacteriaceae</taxon>
        <taxon>Escherichia</taxon>
    </lineage>
</organism>
<proteinExistence type="inferred from homology"/>
<protein>
    <recommendedName>
        <fullName evidence="1">Cardiolipin synthase A</fullName>
        <shortName evidence="1">CL synthase</shortName>
        <ecNumber evidence="1">2.7.8.-</ecNumber>
    </recommendedName>
</protein>
<comment type="function">
    <text evidence="1">Catalyzes the reversible phosphatidyl group transfer from one phosphatidylglycerol molecule to another to form cardiolipin (CL) (diphosphatidylglycerol) and glycerol.</text>
</comment>
<comment type="catalytic activity">
    <reaction evidence="1">
        <text>2 a 1,2-diacyl-sn-glycero-3-phospho-(1'-sn-glycerol) = a cardiolipin + glycerol</text>
        <dbReference type="Rhea" id="RHEA:31451"/>
        <dbReference type="ChEBI" id="CHEBI:17754"/>
        <dbReference type="ChEBI" id="CHEBI:62237"/>
        <dbReference type="ChEBI" id="CHEBI:64716"/>
    </reaction>
</comment>
<comment type="subcellular location">
    <subcellularLocation>
        <location evidence="1">Cell inner membrane</location>
        <topology evidence="1">Multi-pass membrane protein</topology>
    </subcellularLocation>
</comment>
<comment type="similarity">
    <text evidence="1">Belongs to the phospholipase D family. Cardiolipin synthase subfamily. ClsA sub-subfamily.</text>
</comment>
<accession>Q0TIC2</accession>
<feature type="chain" id="PRO_1000058484" description="Cardiolipin synthase A">
    <location>
        <begin position="1"/>
        <end position="486"/>
    </location>
</feature>
<feature type="transmembrane region" description="Helical" evidence="1">
    <location>
        <begin position="3"/>
        <end position="23"/>
    </location>
</feature>
<feature type="transmembrane region" description="Helical" evidence="1">
    <location>
        <begin position="38"/>
        <end position="58"/>
    </location>
</feature>
<feature type="domain" description="PLD phosphodiesterase 1" evidence="1">
    <location>
        <begin position="219"/>
        <end position="246"/>
    </location>
</feature>
<feature type="domain" description="PLD phosphodiesterase 2" evidence="1">
    <location>
        <begin position="399"/>
        <end position="426"/>
    </location>
</feature>
<feature type="active site" evidence="1">
    <location>
        <position position="224"/>
    </location>
</feature>
<feature type="active site" evidence="1">
    <location>
        <position position="226"/>
    </location>
</feature>
<feature type="active site" evidence="1">
    <location>
        <position position="231"/>
    </location>
</feature>
<feature type="active site" evidence="1">
    <location>
        <position position="404"/>
    </location>
</feature>
<feature type="active site" evidence="1">
    <location>
        <position position="406"/>
    </location>
</feature>
<feature type="active site" evidence="1">
    <location>
        <position position="411"/>
    </location>
</feature>